<name>FLIT_ECOLI</name>
<gene>
    <name evidence="1" type="primary">fliT</name>
    <name type="ordered locus">b1926</name>
    <name type="ordered locus">JW1911</name>
</gene>
<proteinExistence type="evidence at protein level"/>
<dbReference type="EMBL" id="M85240">
    <property type="protein sequence ID" value="AAA23792.1"/>
    <property type="molecule type" value="Genomic_DNA"/>
</dbReference>
<dbReference type="EMBL" id="U00096">
    <property type="protein sequence ID" value="AAC74993.1"/>
    <property type="molecule type" value="Genomic_DNA"/>
</dbReference>
<dbReference type="EMBL" id="AP009048">
    <property type="protein sequence ID" value="BAA15754.1"/>
    <property type="molecule type" value="Genomic_DNA"/>
</dbReference>
<dbReference type="PIR" id="C64956">
    <property type="entry name" value="C64956"/>
</dbReference>
<dbReference type="RefSeq" id="NP_416436.1">
    <property type="nucleotide sequence ID" value="NC_000913.3"/>
</dbReference>
<dbReference type="RefSeq" id="WP_001015033.1">
    <property type="nucleotide sequence ID" value="NZ_LN832404.1"/>
</dbReference>
<dbReference type="SMR" id="P0ABY2"/>
<dbReference type="BioGRID" id="4260367">
    <property type="interactions" value="26"/>
</dbReference>
<dbReference type="BioGRID" id="850790">
    <property type="interactions" value="4"/>
</dbReference>
<dbReference type="FunCoup" id="P0ABY2">
    <property type="interactions" value="140"/>
</dbReference>
<dbReference type="IntAct" id="P0ABY2">
    <property type="interactions" value="21"/>
</dbReference>
<dbReference type="STRING" id="511145.b1926"/>
<dbReference type="PaxDb" id="511145-b1926"/>
<dbReference type="EnsemblBacteria" id="AAC74993">
    <property type="protein sequence ID" value="AAC74993"/>
    <property type="gene ID" value="b1926"/>
</dbReference>
<dbReference type="GeneID" id="75172048"/>
<dbReference type="GeneID" id="946433"/>
<dbReference type="KEGG" id="ecj:JW1911"/>
<dbReference type="KEGG" id="eco:b1926"/>
<dbReference type="KEGG" id="ecoc:C3026_10925"/>
<dbReference type="PATRIC" id="fig|1411691.4.peg.323"/>
<dbReference type="EchoBASE" id="EB1362"/>
<dbReference type="eggNOG" id="ENOG5032ZV7">
    <property type="taxonomic scope" value="Bacteria"/>
</dbReference>
<dbReference type="HOGENOM" id="CLU_155793_1_1_6"/>
<dbReference type="InParanoid" id="P0ABY2"/>
<dbReference type="OMA" id="DMEITYL"/>
<dbReference type="OrthoDB" id="6494117at2"/>
<dbReference type="PhylomeDB" id="P0ABY2"/>
<dbReference type="BioCyc" id="EcoCyc:EG11389-MONOMER"/>
<dbReference type="PRO" id="PR:P0ABY2"/>
<dbReference type="Proteomes" id="UP000000625">
    <property type="component" value="Chromosome"/>
</dbReference>
<dbReference type="GO" id="GO:0005829">
    <property type="term" value="C:cytosol"/>
    <property type="evidence" value="ECO:0007669"/>
    <property type="project" value="UniProtKB-SubCell"/>
</dbReference>
<dbReference type="GO" id="GO:0044781">
    <property type="term" value="P:bacterial-type flagellum organization"/>
    <property type="evidence" value="ECO:0007669"/>
    <property type="project" value="UniProtKB-KW"/>
</dbReference>
<dbReference type="GO" id="GO:0071973">
    <property type="term" value="P:bacterial-type flagellum-dependent cell motility"/>
    <property type="evidence" value="ECO:0000315"/>
    <property type="project" value="EcoCyc"/>
</dbReference>
<dbReference type="GO" id="GO:1902209">
    <property type="term" value="P:negative regulation of bacterial-type flagellum assembly"/>
    <property type="evidence" value="ECO:0007669"/>
    <property type="project" value="UniProtKB-UniRule"/>
</dbReference>
<dbReference type="GO" id="GO:0006457">
    <property type="term" value="P:protein folding"/>
    <property type="evidence" value="ECO:0007669"/>
    <property type="project" value="UniProtKB-UniRule"/>
</dbReference>
<dbReference type="FunFam" id="1.20.58.380:FF:000001">
    <property type="entry name" value="Flagellar protein FliT"/>
    <property type="match status" value="1"/>
</dbReference>
<dbReference type="Gene3D" id="1.20.58.380">
    <property type="entry name" value="Flagellar protein flit"/>
    <property type="match status" value="1"/>
</dbReference>
<dbReference type="HAMAP" id="MF_01180">
    <property type="entry name" value="FliT"/>
    <property type="match status" value="1"/>
</dbReference>
<dbReference type="InterPro" id="IPR008622">
    <property type="entry name" value="FliT"/>
</dbReference>
<dbReference type="NCBIfam" id="NF007836">
    <property type="entry name" value="PRK10548.1"/>
    <property type="match status" value="1"/>
</dbReference>
<dbReference type="Pfam" id="PF05400">
    <property type="entry name" value="FliT"/>
    <property type="match status" value="1"/>
</dbReference>
<feature type="chain" id="PRO_0000180974" description="Flagellar protein FliT">
    <location>
        <begin position="1"/>
        <end position="121"/>
    </location>
</feature>
<feature type="region of interest" description="Required for homodimerization" evidence="1">
    <location>
        <begin position="1"/>
        <end position="50"/>
    </location>
</feature>
<feature type="region of interest" description="FliD binding" evidence="1">
    <location>
        <begin position="60"/>
        <end position="98"/>
    </location>
</feature>
<sequence>MNHAPHLYFAWQQLVEKSQLMLRLATEEQWDELIASEMAYVNAVQEIAHLTEEVDPSTTMQEQLRPMLRLILDNESKVKQLLQIRMDELAKLVGQSSVQKSVLSAYGDQGGFVLAPQDNLF</sequence>
<comment type="function">
    <text evidence="1">Dual-function protein that regulates the transcription of class 2 flagellar operons and that also acts as an export chaperone for the filament-capping protein FliD. As a transcriptional regulator, acts as an anti-FlhDC factor; it directly binds FlhC, thus inhibiting the binding of the FlhC/FlhD complex to class 2 promoters, resulting in decreased expression of class 2 flagellar operons. As a chaperone, effects FliD transition to the membrane by preventing its premature polymerization, and by directing it to the export apparatus.</text>
</comment>
<comment type="subunit">
    <text evidence="1">Homodimer. Interacts with FliD and FlhC.</text>
</comment>
<comment type="interaction">
    <interactant intactId="EBI-1114780">
        <id>P0ABY2</id>
    </interactant>
    <interactant intactId="EBI-1126352">
        <id>P24216</id>
        <label>fliD</label>
    </interactant>
    <organismsDiffer>false</organismsDiffer>
    <experiments>4</experiments>
</comment>
<comment type="subcellular location">
    <subcellularLocation>
        <location evidence="2">Cytoplasm</location>
        <location evidence="2">Cytosol</location>
    </subcellularLocation>
</comment>
<comment type="similarity">
    <text evidence="1">Belongs to the FliT family.</text>
</comment>
<keyword id="KW-1005">Bacterial flagellum biogenesis</keyword>
<keyword id="KW-0143">Chaperone</keyword>
<keyword id="KW-0963">Cytoplasm</keyword>
<keyword id="KW-1185">Reference proteome</keyword>
<keyword id="KW-0678">Repressor</keyword>
<keyword id="KW-0804">Transcription</keyword>
<keyword id="KW-0805">Transcription regulation</keyword>
<reference key="1">
    <citation type="journal article" date="1992" name="J. Gen. Microbiol.">
        <title>Subdivision of flagellar region III of the Escherichia coli and Salmonella typhimurium chromosomes and identification of two additional flagellar genes.</title>
        <authorList>
            <person name="Kawagishi I."/>
            <person name="Mueller V."/>
            <person name="Williams A.W."/>
            <person name="Irikura V.M."/>
            <person name="Macnab R.M."/>
        </authorList>
    </citation>
    <scope>NUCLEOTIDE SEQUENCE [GENOMIC DNA]</scope>
    <source>
        <strain>JA11</strain>
    </source>
</reference>
<reference key="2">
    <citation type="journal article" date="1996" name="DNA Res.">
        <title>A 460-kb DNA sequence of the Escherichia coli K-12 genome corresponding to the 40.1-50.0 min region on the linkage map.</title>
        <authorList>
            <person name="Itoh T."/>
            <person name="Aiba H."/>
            <person name="Baba T."/>
            <person name="Fujita K."/>
            <person name="Hayashi K."/>
            <person name="Inada T."/>
            <person name="Isono K."/>
            <person name="Kasai H."/>
            <person name="Kimura S."/>
            <person name="Kitakawa M."/>
            <person name="Kitagawa M."/>
            <person name="Makino K."/>
            <person name="Miki T."/>
            <person name="Mizobuchi K."/>
            <person name="Mori H."/>
            <person name="Mori T."/>
            <person name="Motomura K."/>
            <person name="Nakade S."/>
            <person name="Nakamura Y."/>
            <person name="Nashimoto H."/>
            <person name="Nishio Y."/>
            <person name="Oshima T."/>
            <person name="Saito N."/>
            <person name="Sampei G."/>
            <person name="Seki Y."/>
            <person name="Sivasundaram S."/>
            <person name="Tagami H."/>
            <person name="Takeda J."/>
            <person name="Takemoto K."/>
            <person name="Wada C."/>
            <person name="Yamamoto Y."/>
            <person name="Horiuchi T."/>
        </authorList>
    </citation>
    <scope>NUCLEOTIDE SEQUENCE [LARGE SCALE GENOMIC DNA]</scope>
    <source>
        <strain>K12 / W3110 / ATCC 27325 / DSM 5911</strain>
    </source>
</reference>
<reference key="3">
    <citation type="journal article" date="1997" name="Science">
        <title>The complete genome sequence of Escherichia coli K-12.</title>
        <authorList>
            <person name="Blattner F.R."/>
            <person name="Plunkett G. III"/>
            <person name="Bloch C.A."/>
            <person name="Perna N.T."/>
            <person name="Burland V."/>
            <person name="Riley M."/>
            <person name="Collado-Vides J."/>
            <person name="Glasner J.D."/>
            <person name="Rode C.K."/>
            <person name="Mayhew G.F."/>
            <person name="Gregor J."/>
            <person name="Davis N.W."/>
            <person name="Kirkpatrick H.A."/>
            <person name="Goeden M.A."/>
            <person name="Rose D.J."/>
            <person name="Mau B."/>
            <person name="Shao Y."/>
        </authorList>
    </citation>
    <scope>NUCLEOTIDE SEQUENCE [LARGE SCALE GENOMIC DNA]</scope>
    <source>
        <strain>K12 / MG1655 / ATCC 47076</strain>
    </source>
</reference>
<reference key="4">
    <citation type="journal article" date="2006" name="Mol. Syst. Biol.">
        <title>Highly accurate genome sequences of Escherichia coli K-12 strains MG1655 and W3110.</title>
        <authorList>
            <person name="Hayashi K."/>
            <person name="Morooka N."/>
            <person name="Yamamoto Y."/>
            <person name="Fujita K."/>
            <person name="Isono K."/>
            <person name="Choi S."/>
            <person name="Ohtsubo E."/>
            <person name="Baba T."/>
            <person name="Wanner B.L."/>
            <person name="Mori H."/>
            <person name="Horiuchi T."/>
        </authorList>
    </citation>
    <scope>NUCLEOTIDE SEQUENCE [LARGE SCALE GENOMIC DNA]</scope>
    <source>
        <strain>K12 / W3110 / ATCC 27325 / DSM 5911</strain>
    </source>
</reference>
<protein>
    <recommendedName>
        <fullName evidence="1">Flagellar protein FliT</fullName>
    </recommendedName>
</protein>
<organism>
    <name type="scientific">Escherichia coli (strain K12)</name>
    <dbReference type="NCBI Taxonomy" id="83333"/>
    <lineage>
        <taxon>Bacteria</taxon>
        <taxon>Pseudomonadati</taxon>
        <taxon>Pseudomonadota</taxon>
        <taxon>Gammaproteobacteria</taxon>
        <taxon>Enterobacterales</taxon>
        <taxon>Enterobacteriaceae</taxon>
        <taxon>Escherichia</taxon>
    </lineage>
</organism>
<evidence type="ECO:0000255" key="1">
    <source>
        <dbReference type="HAMAP-Rule" id="MF_01180"/>
    </source>
</evidence>
<evidence type="ECO:0000305" key="2"/>
<accession>P0ABY2</accession>
<accession>P26610</accession>